<dbReference type="EMBL" id="FM180568">
    <property type="protein sequence ID" value="CAS10754.1"/>
    <property type="molecule type" value="Genomic_DNA"/>
</dbReference>
<dbReference type="RefSeq" id="WP_001277194.1">
    <property type="nucleotide sequence ID" value="NC_011601.1"/>
</dbReference>
<dbReference type="SMR" id="B7UI00"/>
<dbReference type="KEGG" id="ecg:E2348C_3206"/>
<dbReference type="HOGENOM" id="CLU_130694_5_0_6"/>
<dbReference type="Proteomes" id="UP000008205">
    <property type="component" value="Chromosome"/>
</dbReference>
<dbReference type="GO" id="GO:0005737">
    <property type="term" value="C:cytoplasm"/>
    <property type="evidence" value="ECO:0007669"/>
    <property type="project" value="TreeGrafter"/>
</dbReference>
<dbReference type="Gene3D" id="3.30.1200.10">
    <property type="entry name" value="YggU-like"/>
    <property type="match status" value="1"/>
</dbReference>
<dbReference type="HAMAP" id="MF_00634">
    <property type="entry name" value="UPF0235"/>
    <property type="match status" value="1"/>
</dbReference>
<dbReference type="InterPro" id="IPR003746">
    <property type="entry name" value="DUF167"/>
</dbReference>
<dbReference type="InterPro" id="IPR036591">
    <property type="entry name" value="YggU-like_sf"/>
</dbReference>
<dbReference type="NCBIfam" id="TIGR00251">
    <property type="entry name" value="DUF167 family protein"/>
    <property type="match status" value="1"/>
</dbReference>
<dbReference type="NCBIfam" id="NF003466">
    <property type="entry name" value="PRK05090.1"/>
    <property type="match status" value="1"/>
</dbReference>
<dbReference type="PANTHER" id="PTHR13420">
    <property type="entry name" value="UPF0235 PROTEIN C15ORF40"/>
    <property type="match status" value="1"/>
</dbReference>
<dbReference type="PANTHER" id="PTHR13420:SF7">
    <property type="entry name" value="UPF0235 PROTEIN C15ORF40"/>
    <property type="match status" value="1"/>
</dbReference>
<dbReference type="Pfam" id="PF02594">
    <property type="entry name" value="DUF167"/>
    <property type="match status" value="1"/>
</dbReference>
<dbReference type="SMART" id="SM01152">
    <property type="entry name" value="DUF167"/>
    <property type="match status" value="1"/>
</dbReference>
<dbReference type="SUPFAM" id="SSF69786">
    <property type="entry name" value="YggU-like"/>
    <property type="match status" value="1"/>
</dbReference>
<gene>
    <name evidence="1" type="primary">yggU</name>
    <name type="ordered locus">E2348C_3206</name>
</gene>
<sequence>MSAVTINDDGLVLRLYIQPKASRDSIVGLHGDEVKVAITAPPVDGQANSHLVKFLGKQFRVAKSQVVIEKGELGRHKQIKIINPQQIPPEIAALLN</sequence>
<comment type="similarity">
    <text evidence="1">Belongs to the UPF0235 family.</text>
</comment>
<evidence type="ECO:0000255" key="1">
    <source>
        <dbReference type="HAMAP-Rule" id="MF_00634"/>
    </source>
</evidence>
<protein>
    <recommendedName>
        <fullName evidence="1">UPF0235 protein YggU</fullName>
    </recommendedName>
</protein>
<accession>B7UI00</accession>
<name>YGGU_ECO27</name>
<keyword id="KW-1185">Reference proteome</keyword>
<organism>
    <name type="scientific">Escherichia coli O127:H6 (strain E2348/69 / EPEC)</name>
    <dbReference type="NCBI Taxonomy" id="574521"/>
    <lineage>
        <taxon>Bacteria</taxon>
        <taxon>Pseudomonadati</taxon>
        <taxon>Pseudomonadota</taxon>
        <taxon>Gammaproteobacteria</taxon>
        <taxon>Enterobacterales</taxon>
        <taxon>Enterobacteriaceae</taxon>
        <taxon>Escherichia</taxon>
    </lineage>
</organism>
<proteinExistence type="inferred from homology"/>
<reference key="1">
    <citation type="journal article" date="2009" name="J. Bacteriol.">
        <title>Complete genome sequence and comparative genome analysis of enteropathogenic Escherichia coli O127:H6 strain E2348/69.</title>
        <authorList>
            <person name="Iguchi A."/>
            <person name="Thomson N.R."/>
            <person name="Ogura Y."/>
            <person name="Saunders D."/>
            <person name="Ooka T."/>
            <person name="Henderson I.R."/>
            <person name="Harris D."/>
            <person name="Asadulghani M."/>
            <person name="Kurokawa K."/>
            <person name="Dean P."/>
            <person name="Kenny B."/>
            <person name="Quail M.A."/>
            <person name="Thurston S."/>
            <person name="Dougan G."/>
            <person name="Hayashi T."/>
            <person name="Parkhill J."/>
            <person name="Frankel G."/>
        </authorList>
    </citation>
    <scope>NUCLEOTIDE SEQUENCE [LARGE SCALE GENOMIC DNA]</scope>
    <source>
        <strain>E2348/69 / EPEC</strain>
    </source>
</reference>
<feature type="chain" id="PRO_1000147340" description="UPF0235 protein YggU">
    <location>
        <begin position="1"/>
        <end position="96"/>
    </location>
</feature>